<accession>Q1W375</accession>
<name>PMM_NICBE</name>
<evidence type="ECO:0000250" key="1">
    <source>
        <dbReference type="UniProtKB" id="A0A0U1WZ18"/>
    </source>
</evidence>
<evidence type="ECO:0000250" key="2">
    <source>
        <dbReference type="UniProtKB" id="P31353"/>
    </source>
</evidence>
<evidence type="ECO:0000250" key="3">
    <source>
        <dbReference type="UniProtKB" id="Q92871"/>
    </source>
</evidence>
<evidence type="ECO:0000269" key="4">
    <source>
    </source>
</evidence>
<evidence type="ECO:0000303" key="5">
    <source>
    </source>
</evidence>
<evidence type="ECO:0000305" key="6"/>
<evidence type="ECO:0000305" key="7">
    <source>
    </source>
</evidence>
<feature type="chain" id="PRO_0000326496" description="Phosphomannomutase">
    <location>
        <begin position="1"/>
        <end position="252"/>
    </location>
</feature>
<feature type="active site" description="Nucleophile" evidence="3">
    <location>
        <position position="13"/>
    </location>
</feature>
<feature type="active site" description="Proton donor/acceptor" evidence="3">
    <location>
        <position position="15"/>
    </location>
</feature>
<feature type="binding site" evidence="3">
    <location>
        <position position="13"/>
    </location>
    <ligand>
        <name>Mg(2+)</name>
        <dbReference type="ChEBI" id="CHEBI:18420"/>
        <label>1</label>
    </ligand>
</feature>
<feature type="binding site" evidence="3">
    <location>
        <position position="15"/>
    </location>
    <ligand>
        <name>Mg(2+)</name>
        <dbReference type="ChEBI" id="CHEBI:18420"/>
        <label>1</label>
    </ligand>
</feature>
<feature type="binding site" evidence="3">
    <location>
        <position position="22"/>
    </location>
    <ligand>
        <name>alpha-D-mannose 1-phosphate</name>
        <dbReference type="ChEBI" id="CHEBI:58409"/>
    </ligand>
</feature>
<feature type="binding site" evidence="3">
    <location>
        <position position="124"/>
    </location>
    <ligand>
        <name>alpha-D-mannose 1-phosphate</name>
        <dbReference type="ChEBI" id="CHEBI:58409"/>
    </ligand>
</feature>
<feature type="binding site" evidence="3">
    <location>
        <position position="135"/>
    </location>
    <ligand>
        <name>alpha-D-mannose 1-phosphate</name>
        <dbReference type="ChEBI" id="CHEBI:58409"/>
    </ligand>
</feature>
<feature type="binding site" evidence="3">
    <location>
        <position position="142"/>
    </location>
    <ligand>
        <name>alpha-D-mannose 1-phosphate</name>
        <dbReference type="ChEBI" id="CHEBI:58409"/>
    </ligand>
</feature>
<feature type="binding site" evidence="3">
    <location>
        <position position="180"/>
    </location>
    <ligand>
        <name>alpha-D-mannose 1-phosphate</name>
        <dbReference type="ChEBI" id="CHEBI:58409"/>
    </ligand>
</feature>
<feature type="binding site" evidence="3">
    <location>
        <position position="182"/>
    </location>
    <ligand>
        <name>alpha-D-mannose 1-phosphate</name>
        <dbReference type="ChEBI" id="CHEBI:58409"/>
    </ligand>
</feature>
<feature type="binding site" evidence="2">
    <location>
        <position position="208"/>
    </location>
    <ligand>
        <name>Mg(2+)</name>
        <dbReference type="ChEBI" id="CHEBI:18420"/>
        <label>1</label>
    </ligand>
</feature>
<feature type="binding site" evidence="2">
    <location>
        <position position="220"/>
    </location>
    <ligand>
        <name>Mg(2+)</name>
        <dbReference type="ChEBI" id="CHEBI:18420"/>
        <label>2</label>
    </ligand>
</feature>
<feature type="binding site" evidence="3">
    <location>
        <position position="225"/>
    </location>
    <ligand>
        <name>Mg(2+)</name>
        <dbReference type="ChEBI" id="CHEBI:18420"/>
        <label>2</label>
    </ligand>
</feature>
<keyword id="KW-0963">Cytoplasm</keyword>
<keyword id="KW-0413">Isomerase</keyword>
<keyword id="KW-0460">Magnesium</keyword>
<keyword id="KW-0479">Metal-binding</keyword>
<comment type="function">
    <text evidence="4 6 7">Catalyzes the interconversion of mannose-6-phosphate to mannose-1-phosphate, the precursor for the synthesis of GDP-mannose (Probable). GDP-mannose is an essential sugar nucleotide for the synthesis of D-mannose-containing cell wall polysaccharides (galactomannans and glucomannans), glycolipids, glycoproteins and the antioxidant L-ascorbate (Probable). Can complement the yeast temperature-sensitive mutant sec53-6 (PubMed:17217471).</text>
</comment>
<comment type="catalytic activity">
    <reaction evidence="7">
        <text>alpha-D-mannose 1-phosphate = D-mannose 6-phosphate</text>
        <dbReference type="Rhea" id="RHEA:11140"/>
        <dbReference type="ChEBI" id="CHEBI:58409"/>
        <dbReference type="ChEBI" id="CHEBI:58735"/>
        <dbReference type="EC" id="5.4.2.8"/>
    </reaction>
</comment>
<comment type="cofactor">
    <cofactor evidence="3">
        <name>Mg(2+)</name>
        <dbReference type="ChEBI" id="CHEBI:18420"/>
    </cofactor>
</comment>
<comment type="pathway">
    <text evidence="6">Nucleotide-sugar biosynthesis; GDP-alpha-D-mannose biosynthesis; alpha-D-mannose 1-phosphate from D-fructose 6-phosphate: step 2/2.</text>
</comment>
<comment type="subunit">
    <text evidence="3">Homodimer.</text>
</comment>
<comment type="subcellular location">
    <subcellularLocation>
        <location evidence="1">Cytoplasm</location>
    </subcellularLocation>
</comment>
<comment type="tissue specificity">
    <text evidence="4">Expressed in roots, stems, leaves, flowers and immature fruits.</text>
</comment>
<comment type="miscellaneous">
    <text evidence="4">Overexpression of PMM increases total leaf ascorbate content (PubMed:17217471). Silencing of PMM decreases significantly total leaf ascorbate content (PubMed:17217471).</text>
</comment>
<comment type="similarity">
    <text evidence="6">Belongs to the eukaryotic PMM family.</text>
</comment>
<reference key="1">
    <citation type="journal article" date="2007" name="Plant J.">
        <title>Molecular and functional analysis of phosphomannomutase (PMM) from higher plants and genetic evidence for the involvement of PMM in ascorbic acid biosynthesis in Arabidopsis and Nicotiana benthamiana.</title>
        <authorList>
            <person name="Qian W."/>
            <person name="Yu C."/>
            <person name="Qin H."/>
            <person name="Liu X."/>
            <person name="Zhang A."/>
            <person name="Johansen I.E."/>
            <person name="Wang D."/>
        </authorList>
    </citation>
    <scope>NUCLEOTIDE SEQUENCE [MRNA]</scope>
    <scope>FUNCTION</scope>
    <scope>CATALYTIC ACTIVITY</scope>
    <scope>TISSUE SPECIFICITY</scope>
</reference>
<sequence length="252" mass="28575">MAARKPGLIALFDVDGTLTAPRKEVTPEMLKFMKELRKVVTVGVVGGSDLVKISEQLGKTVTTDYDYCFSENGLVAHKDGKLIGTQSLKSFLGDEKLKEFINFTLHYIADLDIPIKRGTFIEFRSGMLNVSPIGRDCSQEERDEFEKYDKVHKIRQTMVSVLREKFAHLNLTFSIGGQISFDVFPQGWDKTYCLRYLEEFNEIHFFGDKTYKGGNDHEIYESERTVGHTVTSPEDTVKQCSEQFLGKDNGSS</sequence>
<organism>
    <name type="scientific">Nicotiana benthamiana</name>
    <dbReference type="NCBI Taxonomy" id="4100"/>
    <lineage>
        <taxon>Eukaryota</taxon>
        <taxon>Viridiplantae</taxon>
        <taxon>Streptophyta</taxon>
        <taxon>Embryophyta</taxon>
        <taxon>Tracheophyta</taxon>
        <taxon>Spermatophyta</taxon>
        <taxon>Magnoliopsida</taxon>
        <taxon>eudicotyledons</taxon>
        <taxon>Gunneridae</taxon>
        <taxon>Pentapetalae</taxon>
        <taxon>asterids</taxon>
        <taxon>lamiids</taxon>
        <taxon>Solanales</taxon>
        <taxon>Solanaceae</taxon>
        <taxon>Nicotianoideae</taxon>
        <taxon>Nicotianeae</taxon>
        <taxon>Nicotiana</taxon>
    </lineage>
</organism>
<protein>
    <recommendedName>
        <fullName evidence="5">Phosphomannomutase</fullName>
        <shortName evidence="5">NbPMM</shortName>
        <ecNumber evidence="7">5.4.2.8</ecNumber>
    </recommendedName>
</protein>
<dbReference type="EC" id="5.4.2.8" evidence="7"/>
<dbReference type="EMBL" id="DQ442995">
    <property type="protein sequence ID" value="ABD97874.1"/>
    <property type="molecule type" value="mRNA"/>
</dbReference>
<dbReference type="SMR" id="Q1W375"/>
<dbReference type="STRING" id="4097.Q1W375"/>
<dbReference type="PaxDb" id="4097-Q1W375"/>
<dbReference type="KEGG" id="nta:107794186"/>
<dbReference type="UniPathway" id="UPA00126">
    <property type="reaction ID" value="UER00424"/>
</dbReference>
<dbReference type="GO" id="GO:0005829">
    <property type="term" value="C:cytosol"/>
    <property type="evidence" value="ECO:0007669"/>
    <property type="project" value="TreeGrafter"/>
</dbReference>
<dbReference type="GO" id="GO:0046872">
    <property type="term" value="F:metal ion binding"/>
    <property type="evidence" value="ECO:0007669"/>
    <property type="project" value="UniProtKB-KW"/>
</dbReference>
<dbReference type="GO" id="GO:0004615">
    <property type="term" value="F:phosphomannomutase activity"/>
    <property type="evidence" value="ECO:0007669"/>
    <property type="project" value="UniProtKB-EC"/>
</dbReference>
<dbReference type="GO" id="GO:0009298">
    <property type="term" value="P:GDP-mannose biosynthetic process"/>
    <property type="evidence" value="ECO:0007669"/>
    <property type="project" value="UniProtKB-UniPathway"/>
</dbReference>
<dbReference type="GO" id="GO:0006013">
    <property type="term" value="P:mannose metabolic process"/>
    <property type="evidence" value="ECO:0007669"/>
    <property type="project" value="TreeGrafter"/>
</dbReference>
<dbReference type="GO" id="GO:0006487">
    <property type="term" value="P:protein N-linked glycosylation"/>
    <property type="evidence" value="ECO:0007669"/>
    <property type="project" value="TreeGrafter"/>
</dbReference>
<dbReference type="CDD" id="cd02585">
    <property type="entry name" value="HAD_PMM"/>
    <property type="match status" value="1"/>
</dbReference>
<dbReference type="FunFam" id="3.30.1240.20:FF:000001">
    <property type="entry name" value="Phosphomannomutase"/>
    <property type="match status" value="1"/>
</dbReference>
<dbReference type="Gene3D" id="3.30.1240.20">
    <property type="match status" value="1"/>
</dbReference>
<dbReference type="Gene3D" id="3.40.50.1000">
    <property type="entry name" value="HAD superfamily/HAD-like"/>
    <property type="match status" value="1"/>
</dbReference>
<dbReference type="InterPro" id="IPR036412">
    <property type="entry name" value="HAD-like_sf"/>
</dbReference>
<dbReference type="InterPro" id="IPR006379">
    <property type="entry name" value="HAD-SF_hydro_IIB"/>
</dbReference>
<dbReference type="InterPro" id="IPR023214">
    <property type="entry name" value="HAD_sf"/>
</dbReference>
<dbReference type="InterPro" id="IPR005002">
    <property type="entry name" value="PMM"/>
</dbReference>
<dbReference type="InterPro" id="IPR043169">
    <property type="entry name" value="PMM_cap"/>
</dbReference>
<dbReference type="NCBIfam" id="TIGR01484">
    <property type="entry name" value="HAD-SF-IIB"/>
    <property type="match status" value="1"/>
</dbReference>
<dbReference type="PANTHER" id="PTHR10466">
    <property type="entry name" value="PHOSPHOMANNOMUTASE"/>
    <property type="match status" value="1"/>
</dbReference>
<dbReference type="PANTHER" id="PTHR10466:SF0">
    <property type="entry name" value="PHOSPHOMANNOMUTASE"/>
    <property type="match status" value="1"/>
</dbReference>
<dbReference type="Pfam" id="PF03332">
    <property type="entry name" value="PMM"/>
    <property type="match status" value="1"/>
</dbReference>
<dbReference type="SFLD" id="SFLDF00445">
    <property type="entry name" value="alpha-phosphomannomutase"/>
    <property type="match status" value="1"/>
</dbReference>
<dbReference type="SFLD" id="SFLDS00003">
    <property type="entry name" value="Haloacid_Dehalogenase"/>
    <property type="match status" value="1"/>
</dbReference>
<dbReference type="SUPFAM" id="SSF56784">
    <property type="entry name" value="HAD-like"/>
    <property type="match status" value="1"/>
</dbReference>
<proteinExistence type="evidence at protein level"/>
<gene>
    <name evidence="5" type="primary">PMM</name>
</gene>